<name>EXP1_YEAST</name>
<comment type="function">
    <text evidence="3">Specific cargo receptor protein for the plasma membrane ATPase PMA1 that acts with PSG1 to promote the transport and maturation of PMA1 (PubMed:28727280). EXP1 and PSG1 probably act sequentially to promote PMA1 sorting between the ER and the Golgi, with EXP1 promoting PMA1 export from the ER to the Golgi while PSG1 has a role in PMA1 maturation or quality control in the Golgi (PubMed:28727280).</text>
</comment>
<comment type="subunit">
    <text evidence="3">Interacts with PMA1 and PSG1.</text>
</comment>
<comment type="subcellular location">
    <subcellularLocation>
        <location evidence="3">Endoplasmic reticulum membrane</location>
        <topology evidence="5">Single-pass type I membrane protein</topology>
    </subcellularLocation>
    <subcellularLocation>
        <location evidence="3">Cytoplasmic vesicle</location>
        <location evidence="3">COPI-coated vesicle membrane</location>
        <topology evidence="5">Single-pass type I membrane protein</topology>
    </subcellularLocation>
    <subcellularLocation>
        <location evidence="3">Cytoplasmic vesicle</location>
        <location evidence="3">COPII-coated vesicle membrane</location>
        <topology evidence="5">Single-pass type I membrane protein</topology>
    </subcellularLocation>
    <subcellularLocation>
        <location evidence="3">Golgi apparatus membrane</location>
        <topology evidence="5">Single-pass type I membrane protein</topology>
    </subcellularLocation>
    <text evidence="3">Cycles between the ER and the Golgi apparatus.</text>
</comment>
<comment type="disruption phenotype">
    <text evidence="3">Lead to ER retention of PMA1.</text>
</comment>
<comment type="miscellaneous">
    <text evidence="2">Present with 3260 molecules/cell in log phase SD medium.</text>
</comment>
<dbReference type="EMBL" id="Z74169">
    <property type="protein sequence ID" value="CAA98689.1"/>
    <property type="molecule type" value="Genomic_DNA"/>
</dbReference>
<dbReference type="EMBL" id="AY558161">
    <property type="protein sequence ID" value="AAS56487.1"/>
    <property type="molecule type" value="Genomic_DNA"/>
</dbReference>
<dbReference type="EMBL" id="BK006938">
    <property type="protein sequence ID" value="DAA11739.1"/>
    <property type="molecule type" value="Genomic_DNA"/>
</dbReference>
<dbReference type="PIR" id="S67664">
    <property type="entry name" value="S67664"/>
</dbReference>
<dbReference type="RefSeq" id="NP_010162.1">
    <property type="nucleotide sequence ID" value="NM_001180180.1"/>
</dbReference>
<dbReference type="SMR" id="Q07541"/>
<dbReference type="BioGRID" id="31942">
    <property type="interactions" value="121"/>
</dbReference>
<dbReference type="DIP" id="DIP-5038N"/>
<dbReference type="FunCoup" id="Q07541">
    <property type="interactions" value="103"/>
</dbReference>
<dbReference type="IntAct" id="Q07541">
    <property type="interactions" value="12"/>
</dbReference>
<dbReference type="STRING" id="4932.YDL121C"/>
<dbReference type="GlyGen" id="Q07541">
    <property type="glycosylation" value="1 site, 1 O-linked glycan (1 site)"/>
</dbReference>
<dbReference type="iPTMnet" id="Q07541"/>
<dbReference type="PaxDb" id="4932-YDL121C"/>
<dbReference type="PeptideAtlas" id="Q07541"/>
<dbReference type="TopDownProteomics" id="Q07541"/>
<dbReference type="EnsemblFungi" id="YDL121C_mRNA">
    <property type="protein sequence ID" value="YDL121C"/>
    <property type="gene ID" value="YDL121C"/>
</dbReference>
<dbReference type="GeneID" id="851436"/>
<dbReference type="KEGG" id="sce:YDL121C"/>
<dbReference type="AGR" id="SGD:S000002279"/>
<dbReference type="SGD" id="S000002279">
    <property type="gene designation" value="EXP1"/>
</dbReference>
<dbReference type="VEuPathDB" id="FungiDB:YDL121C"/>
<dbReference type="eggNOG" id="ENOG502SA5C">
    <property type="taxonomic scope" value="Eukaryota"/>
</dbReference>
<dbReference type="HOGENOM" id="CLU_150136_0_0_1"/>
<dbReference type="InParanoid" id="Q07541"/>
<dbReference type="OMA" id="MDIFAYF"/>
<dbReference type="OrthoDB" id="4092812at2759"/>
<dbReference type="BioCyc" id="YEAST:G3O-29520-MONOMER"/>
<dbReference type="BioGRID-ORCS" id="851436">
    <property type="hits" value="0 hits in 10 CRISPR screens"/>
</dbReference>
<dbReference type="PRO" id="PR:Q07541"/>
<dbReference type="Proteomes" id="UP000002311">
    <property type="component" value="Chromosome IV"/>
</dbReference>
<dbReference type="RNAct" id="Q07541">
    <property type="molecule type" value="protein"/>
</dbReference>
<dbReference type="GO" id="GO:0030663">
    <property type="term" value="C:COPI-coated vesicle membrane"/>
    <property type="evidence" value="ECO:0007669"/>
    <property type="project" value="UniProtKB-SubCell"/>
</dbReference>
<dbReference type="GO" id="GO:0005783">
    <property type="term" value="C:endoplasmic reticulum"/>
    <property type="evidence" value="ECO:0000314"/>
    <property type="project" value="SGD"/>
</dbReference>
<dbReference type="GO" id="GO:0005789">
    <property type="term" value="C:endoplasmic reticulum membrane"/>
    <property type="evidence" value="ECO:0007669"/>
    <property type="project" value="UniProtKB-SubCell"/>
</dbReference>
<dbReference type="GO" id="GO:0012507">
    <property type="term" value="C:ER to Golgi transport vesicle membrane"/>
    <property type="evidence" value="ECO:0007669"/>
    <property type="project" value="UniProtKB-SubCell"/>
</dbReference>
<dbReference type="GO" id="GO:0000139">
    <property type="term" value="C:Golgi membrane"/>
    <property type="evidence" value="ECO:0007669"/>
    <property type="project" value="UniProtKB-SubCell"/>
</dbReference>
<evidence type="ECO:0000255" key="1"/>
<evidence type="ECO:0000269" key="2">
    <source>
    </source>
</evidence>
<evidence type="ECO:0000269" key="3">
    <source>
    </source>
</evidence>
<evidence type="ECO:0000303" key="4">
    <source>
    </source>
</evidence>
<evidence type="ECO:0000305" key="5">
    <source>
    </source>
</evidence>
<proteinExistence type="evidence at protein level"/>
<reference key="1">
    <citation type="journal article" date="1997" name="Nature">
        <title>The nucleotide sequence of Saccharomyces cerevisiae chromosome IV.</title>
        <authorList>
            <person name="Jacq C."/>
            <person name="Alt-Moerbe J."/>
            <person name="Andre B."/>
            <person name="Arnold W."/>
            <person name="Bahr A."/>
            <person name="Ballesta J.P.G."/>
            <person name="Bargues M."/>
            <person name="Baron L."/>
            <person name="Becker A."/>
            <person name="Biteau N."/>
            <person name="Bloecker H."/>
            <person name="Blugeon C."/>
            <person name="Boskovic J."/>
            <person name="Brandt P."/>
            <person name="Brueckner M."/>
            <person name="Buitrago M.J."/>
            <person name="Coster F."/>
            <person name="Delaveau T."/>
            <person name="del Rey F."/>
            <person name="Dujon B."/>
            <person name="Eide L.G."/>
            <person name="Garcia-Cantalejo J.M."/>
            <person name="Goffeau A."/>
            <person name="Gomez-Peris A."/>
            <person name="Granotier C."/>
            <person name="Hanemann V."/>
            <person name="Hankeln T."/>
            <person name="Hoheisel J.D."/>
            <person name="Jaeger W."/>
            <person name="Jimenez A."/>
            <person name="Jonniaux J.-L."/>
            <person name="Kraemer C."/>
            <person name="Kuester H."/>
            <person name="Laamanen P."/>
            <person name="Legros Y."/>
            <person name="Louis E.J."/>
            <person name="Moeller-Rieker S."/>
            <person name="Monnet A."/>
            <person name="Moro M."/>
            <person name="Mueller-Auer S."/>
            <person name="Nussbaumer B."/>
            <person name="Paricio N."/>
            <person name="Paulin L."/>
            <person name="Perea J."/>
            <person name="Perez-Alonso M."/>
            <person name="Perez-Ortin J.E."/>
            <person name="Pohl T.M."/>
            <person name="Prydz H."/>
            <person name="Purnelle B."/>
            <person name="Rasmussen S.W."/>
            <person name="Remacha M.A."/>
            <person name="Revuelta J.L."/>
            <person name="Rieger M."/>
            <person name="Salom D."/>
            <person name="Saluz H.P."/>
            <person name="Saiz J.E."/>
            <person name="Saren A.-M."/>
            <person name="Schaefer M."/>
            <person name="Scharfe M."/>
            <person name="Schmidt E.R."/>
            <person name="Schneider C."/>
            <person name="Scholler P."/>
            <person name="Schwarz S."/>
            <person name="Soler-Mira A."/>
            <person name="Urrestarazu L.A."/>
            <person name="Verhasselt P."/>
            <person name="Vissers S."/>
            <person name="Voet M."/>
            <person name="Volckaert G."/>
            <person name="Wagner G."/>
            <person name="Wambutt R."/>
            <person name="Wedler E."/>
            <person name="Wedler H."/>
            <person name="Woelfl S."/>
            <person name="Harris D.E."/>
            <person name="Bowman S."/>
            <person name="Brown D."/>
            <person name="Churcher C.M."/>
            <person name="Connor R."/>
            <person name="Dedman K."/>
            <person name="Gentles S."/>
            <person name="Hamlin N."/>
            <person name="Hunt S."/>
            <person name="Jones L."/>
            <person name="McDonald S."/>
            <person name="Murphy L.D."/>
            <person name="Niblett D."/>
            <person name="Odell C."/>
            <person name="Oliver K."/>
            <person name="Rajandream M.A."/>
            <person name="Richards C."/>
            <person name="Shore L."/>
            <person name="Walsh S.V."/>
            <person name="Barrell B.G."/>
            <person name="Dietrich F.S."/>
            <person name="Mulligan J.T."/>
            <person name="Allen E."/>
            <person name="Araujo R."/>
            <person name="Aviles E."/>
            <person name="Berno A."/>
            <person name="Carpenter J."/>
            <person name="Chen E."/>
            <person name="Cherry J.M."/>
            <person name="Chung E."/>
            <person name="Duncan M."/>
            <person name="Hunicke-Smith S."/>
            <person name="Hyman R.W."/>
            <person name="Komp C."/>
            <person name="Lashkari D."/>
            <person name="Lew H."/>
            <person name="Lin D."/>
            <person name="Mosedale D."/>
            <person name="Nakahara K."/>
            <person name="Namath A."/>
            <person name="Oefner P."/>
            <person name="Oh C."/>
            <person name="Petel F.X."/>
            <person name="Roberts D."/>
            <person name="Schramm S."/>
            <person name="Schroeder M."/>
            <person name="Shogren T."/>
            <person name="Shroff N."/>
            <person name="Winant A."/>
            <person name="Yelton M.A."/>
            <person name="Botstein D."/>
            <person name="Davis R.W."/>
            <person name="Johnston M."/>
            <person name="Andrews S."/>
            <person name="Brinkman R."/>
            <person name="Cooper J."/>
            <person name="Ding H."/>
            <person name="Du Z."/>
            <person name="Favello A."/>
            <person name="Fulton L."/>
            <person name="Gattung S."/>
            <person name="Greco T."/>
            <person name="Hallsworth K."/>
            <person name="Hawkins J."/>
            <person name="Hillier L.W."/>
            <person name="Jier M."/>
            <person name="Johnson D."/>
            <person name="Johnston L."/>
            <person name="Kirsten J."/>
            <person name="Kucaba T."/>
            <person name="Langston Y."/>
            <person name="Latreille P."/>
            <person name="Le T."/>
            <person name="Mardis E."/>
            <person name="Menezes S."/>
            <person name="Miller N."/>
            <person name="Nhan M."/>
            <person name="Pauley A."/>
            <person name="Peluso D."/>
            <person name="Rifkin L."/>
            <person name="Riles L."/>
            <person name="Taich A."/>
            <person name="Trevaskis E."/>
            <person name="Vignati D."/>
            <person name="Wilcox L."/>
            <person name="Wohldman P."/>
            <person name="Vaudin M."/>
            <person name="Wilson R."/>
            <person name="Waterston R."/>
            <person name="Albermann K."/>
            <person name="Hani J."/>
            <person name="Heumann K."/>
            <person name="Kleine K."/>
            <person name="Mewes H.-W."/>
            <person name="Zollner A."/>
            <person name="Zaccaria P."/>
        </authorList>
    </citation>
    <scope>NUCLEOTIDE SEQUENCE [LARGE SCALE GENOMIC DNA]</scope>
    <source>
        <strain>ATCC 204508 / S288c</strain>
    </source>
</reference>
<reference key="2">
    <citation type="journal article" date="2014" name="G3 (Bethesda)">
        <title>The reference genome sequence of Saccharomyces cerevisiae: Then and now.</title>
        <authorList>
            <person name="Engel S.R."/>
            <person name="Dietrich F.S."/>
            <person name="Fisk D.G."/>
            <person name="Binkley G."/>
            <person name="Balakrishnan R."/>
            <person name="Costanzo M.C."/>
            <person name="Dwight S.S."/>
            <person name="Hitz B.C."/>
            <person name="Karra K."/>
            <person name="Nash R.S."/>
            <person name="Weng S."/>
            <person name="Wong E.D."/>
            <person name="Lloyd P."/>
            <person name="Skrzypek M.S."/>
            <person name="Miyasato S.R."/>
            <person name="Simison M."/>
            <person name="Cherry J.M."/>
        </authorList>
    </citation>
    <scope>GENOME REANNOTATION</scope>
    <source>
        <strain>ATCC 204508 / S288c</strain>
    </source>
</reference>
<reference key="3">
    <citation type="journal article" date="2007" name="Genome Res.">
        <title>Approaching a complete repository of sequence-verified protein-encoding clones for Saccharomyces cerevisiae.</title>
        <authorList>
            <person name="Hu Y."/>
            <person name="Rolfs A."/>
            <person name="Bhullar B."/>
            <person name="Murthy T.V.S."/>
            <person name="Zhu C."/>
            <person name="Berger M.F."/>
            <person name="Camargo A.A."/>
            <person name="Kelley F."/>
            <person name="McCarron S."/>
            <person name="Jepson D."/>
            <person name="Richardson A."/>
            <person name="Raphael J."/>
            <person name="Moreira D."/>
            <person name="Taycher E."/>
            <person name="Zuo D."/>
            <person name="Mohr S."/>
            <person name="Kane M.F."/>
            <person name="Williamson J."/>
            <person name="Simpson A.J.G."/>
            <person name="Bulyk M.L."/>
            <person name="Harlow E."/>
            <person name="Marsischky G."/>
            <person name="Kolodner R.D."/>
            <person name="LaBaer J."/>
        </authorList>
    </citation>
    <scope>NUCLEOTIDE SEQUENCE [GENOMIC DNA]</scope>
    <source>
        <strain>ATCC 204508 / S288c</strain>
    </source>
</reference>
<reference key="4">
    <citation type="journal article" date="2003" name="Nature">
        <title>Global analysis of protein localization in budding yeast.</title>
        <authorList>
            <person name="Huh W.-K."/>
            <person name="Falvo J.V."/>
            <person name="Gerke L.C."/>
            <person name="Carroll A.S."/>
            <person name="Howson R.W."/>
            <person name="Weissman J.S."/>
            <person name="O'Shea E.K."/>
        </authorList>
    </citation>
    <scope>SUBCELLULAR LOCATION [LARGE SCALE ANALYSIS]</scope>
</reference>
<reference key="5">
    <citation type="journal article" date="2003" name="Nature">
        <title>Global analysis of protein expression in yeast.</title>
        <authorList>
            <person name="Ghaemmaghami S."/>
            <person name="Huh W.-K."/>
            <person name="Bower K."/>
            <person name="Howson R.W."/>
            <person name="Belle A."/>
            <person name="Dephoure N."/>
            <person name="O'Shea E.K."/>
            <person name="Weissman J.S."/>
        </authorList>
    </citation>
    <scope>LEVEL OF PROTEIN EXPRESSION [LARGE SCALE ANALYSIS]</scope>
</reference>
<reference key="6">
    <citation type="journal article" date="2009" name="Science">
        <title>Global analysis of Cdk1 substrate phosphorylation sites provides insights into evolution.</title>
        <authorList>
            <person name="Holt L.J."/>
            <person name="Tuch B.B."/>
            <person name="Villen J."/>
            <person name="Johnson A.D."/>
            <person name="Gygi S.P."/>
            <person name="Morgan D.O."/>
        </authorList>
    </citation>
    <scope>IDENTIFICATION BY MASS SPECTROMETRY [LARGE SCALE ANALYSIS]</scope>
</reference>
<reference key="7">
    <citation type="journal article" date="2017" name="Traffic">
        <title>Two novel effectors of trafficking and maturation of the yeast plasma membrane H+ -ATPase.</title>
        <authorList>
            <person name="Geva Y."/>
            <person name="Crissman J."/>
            <person name="Arakel E.C."/>
            <person name="Gomez-Navarro N."/>
            <person name="Chuartzman S.G."/>
            <person name="Stahmer K.R."/>
            <person name="Schwappach B."/>
            <person name="Miller E.A."/>
            <person name="Schuldiner M."/>
        </authorList>
    </citation>
    <scope>FUNCTION</scope>
    <scope>DISRUPTION PHENOTYPE</scope>
    <scope>SUBCELLULAR LOCATION</scope>
    <scope>INTERACTION WITH PMA1 AND PSG1</scope>
    <scope>TOPOLOGY</scope>
</reference>
<gene>
    <name evidence="4" type="primary">EXP1</name>
    <name type="ordered locus">YDL121C</name>
</gene>
<keyword id="KW-0968">Cytoplasmic vesicle</keyword>
<keyword id="KW-0256">Endoplasmic reticulum</keyword>
<keyword id="KW-0333">Golgi apparatus</keyword>
<keyword id="KW-0472">Membrane</keyword>
<keyword id="KW-1185">Reference proteome</keyword>
<keyword id="KW-0735">Signal-anchor</keyword>
<keyword id="KW-0812">Transmembrane</keyword>
<keyword id="KW-1133">Transmembrane helix</keyword>
<organism>
    <name type="scientific">Saccharomyces cerevisiae (strain ATCC 204508 / S288c)</name>
    <name type="common">Baker's yeast</name>
    <dbReference type="NCBI Taxonomy" id="559292"/>
    <lineage>
        <taxon>Eukaryota</taxon>
        <taxon>Fungi</taxon>
        <taxon>Dikarya</taxon>
        <taxon>Ascomycota</taxon>
        <taxon>Saccharomycotina</taxon>
        <taxon>Saccharomycetes</taxon>
        <taxon>Saccharomycetales</taxon>
        <taxon>Saccharomycetaceae</taxon>
        <taxon>Saccharomyces</taxon>
    </lineage>
</organism>
<protein>
    <recommendedName>
        <fullName evidence="4">ER export of PMA1 protein 1</fullName>
    </recommendedName>
</protein>
<sequence length="149" mass="16947">MNLYGYFLLLIIVIAFIALLPLFSGIGTFKLTKPKSSATAQSATGKLGKREYLKKKLDHTNVLKFDLKDTEESLGHDSASASSASRKFEIDSKTGLKRRVIGQYNKDPNDFDFDIDDLINEDELDERREEEKKLKKYNGKKNEAYEGFV</sequence>
<accession>Q07541</accession>
<accession>D6VRM9</accession>
<feature type="chain" id="PRO_0000240867" description="ER export of PMA1 protein 1">
    <location>
        <begin position="1"/>
        <end position="149"/>
    </location>
</feature>
<feature type="topological domain" description="Lumenal" evidence="5">
    <location>
        <begin position="1"/>
        <end position="6"/>
    </location>
</feature>
<feature type="transmembrane region" description="Helical; Signal-anchor for type II membrane protein" evidence="1">
    <location>
        <begin position="7"/>
        <end position="27"/>
    </location>
</feature>
<feature type="topological domain" description="Cytoplasmic" evidence="5">
    <location>
        <begin position="28"/>
        <end position="149"/>
    </location>
</feature>